<comment type="function">
    <text evidence="2 3">Acts as a ligand for C-C chemokine receptor CCR2 (By similarity). Signals through binding and activation of CCR2 and induces a strong chemotactic response and mobilization of intracellular calcium ions (By similarity). Exhibits a chemotactic activity for monocytes and basophils but not neutrophils or eosinophils (By similarity). Plays an important role in mediating peripheral nerve injury-induced neuropathic pain (By similarity). Increases NMDA-mediated synaptic transmission in both dopamine D1 and D2 receptor-containing neurons, which may be caused by MAPK/ERK-dependent phosphorylation of GRIN2B/NMDAR2B (By similarity).</text>
</comment>
<comment type="subunit">
    <text evidence="3">Monomer or homodimer; in equilibrium. Is tethered on endothelial cells by glycosaminoglycan (GAG) side chains of proteoglycans. Interacts with TNFAIP6 (via Link domain).</text>
</comment>
<comment type="subcellular location">
    <subcellularLocation>
        <location evidence="5">Secreted</location>
    </subcellularLocation>
</comment>
<comment type="induction">
    <text evidence="5">In pancreatic islets, secretion is stimulated by IL1B (PubMed:23955712). In islets from Zucker diabetic fatty (ZDF) rats, but not lean animals, secretion is also increased by endocannabinoid anandamide/AEA (PubMed:23955712).</text>
</comment>
<comment type="PTM">
    <text evidence="3">Processing at the N-terminus can regulate receptor and target cell selectivity (By similarity). Deletion of the N-terminal residue converts it from an activator of basophil to an eosinophil chemoattractant (By similarity).</text>
</comment>
<comment type="PTM">
    <text evidence="3">N-Glycosylated.</text>
</comment>
<comment type="similarity">
    <text evidence="6">Belongs to the intercrine beta (chemokine CC) family.</text>
</comment>
<proteinExistence type="evidence at transcript level"/>
<protein>
    <recommendedName>
        <fullName>C-C motif chemokine 2</fullName>
    </recommendedName>
    <alternativeName>
        <fullName>Immediate-early serum-responsive protein JE</fullName>
    </alternativeName>
    <alternativeName>
        <fullName>Monocyte chemoattractant protein 1</fullName>
    </alternativeName>
    <alternativeName>
        <fullName>Monocyte chemotactic protein 1</fullName>
        <shortName>MCP-1</shortName>
    </alternativeName>
    <alternativeName>
        <fullName>Small-inducible cytokine A2</fullName>
    </alternativeName>
</protein>
<gene>
    <name type="primary">Ccl2</name>
    <name type="synonym">Je</name>
    <name type="synonym">Mcp1</name>
    <name type="synonym">Scya2</name>
</gene>
<accession>P14844</accession>
<accession>Q549R5</accession>
<reference key="1">
    <citation type="journal article" date="1990" name="Nucleic Acids Res.">
        <title>Analysis of the rat JE gene promoter identifies an AP-1 binding site essential for basal expression but not for TPA induction.</title>
        <authorList>
            <person name="Timmers H.T.M."/>
            <person name="Pronk G.J."/>
            <person name="Bos J.L."/>
            <person name="van der Eb A.J."/>
        </authorList>
    </citation>
    <scope>NUCLEOTIDE SEQUENCE [GENOMIC DNA]</scope>
    <source>
        <strain>WAG/RIJ</strain>
        <tissue>Kidney</tissue>
    </source>
</reference>
<reference key="2">
    <citation type="journal article" date="1991" name="Biochem. Biophys. Res. Commun.">
        <title>Molecular cloning of rat monocyte chemoattractant protein-1 (MCP-1) and its expression in rat spleen cells and tumor cell lines.</title>
        <authorList>
            <person name="Yoshimura T."/>
            <person name="Takeya M."/>
            <person name="Takahashi K."/>
        </authorList>
    </citation>
    <scope>NUCLEOTIDE SEQUENCE [MRNA]</scope>
</reference>
<reference key="3">
    <citation type="submission" date="1998-04" db="EMBL/GenBank/DDBJ databases">
        <title>Cloning of the full-length rat JE/MCP-1 cDNA.</title>
        <authorList>
            <person name="Poon M."/>
            <person name="Taubman M.B."/>
        </authorList>
    </citation>
    <scope>NUCLEOTIDE SEQUENCE [MRNA]</scope>
    <source>
        <strain>Sprague-Dawley</strain>
        <tissue>Aortic smooth muscle</tissue>
    </source>
</reference>
<reference key="4">
    <citation type="journal article" date="2013" name="Nat. Med.">
        <title>Activation of the Nlrp3 inflammasome in infiltrating macrophages by endocannabinoids mediates beta cell loss in type 2 diabetes.</title>
        <authorList>
            <person name="Jourdan T."/>
            <person name="Godlewski G."/>
            <person name="Cinar R."/>
            <person name="Bertola A."/>
            <person name="Szanda G."/>
            <person name="Liu J."/>
            <person name="Tam J."/>
            <person name="Han T."/>
            <person name="Mukhopadhyay B."/>
            <person name="Skarulis M.C."/>
            <person name="Ju C."/>
            <person name="Aouadi M."/>
            <person name="Czech M.P."/>
            <person name="Kunos G."/>
        </authorList>
    </citation>
    <scope>SUBCELLULAR LOCATION</scope>
    <scope>INDUCTION BY ENDOCANNABINOID ANANDAMIDE AND IL1B</scope>
</reference>
<name>CCL2_RAT</name>
<sequence length="148" mass="16460">MQVSVTLLGLLFTVAACSIHVLSQPDAVNAPLTCCYSFTGKMIPMSRLENYKRITSSRCPKEAVVFVTKLKREICADPNKEWVQKYIRKLDQNQVRSETTVFYKIASTLRTSAPLNVNLTHKSEANASTLFSTTTSSTSVEVTSMTEN</sequence>
<evidence type="ECO:0000250" key="1"/>
<evidence type="ECO:0000250" key="2">
    <source>
        <dbReference type="UniProtKB" id="P10148"/>
    </source>
</evidence>
<evidence type="ECO:0000250" key="3">
    <source>
        <dbReference type="UniProtKB" id="P13500"/>
    </source>
</evidence>
<evidence type="ECO:0000255" key="4"/>
<evidence type="ECO:0000269" key="5">
    <source>
    </source>
</evidence>
<evidence type="ECO:0000305" key="6"/>
<feature type="signal peptide" evidence="1">
    <location>
        <begin position="1"/>
        <end position="23"/>
    </location>
</feature>
<feature type="chain" id="PRO_0000005151" description="C-C motif chemokine 2">
    <location>
        <begin position="24"/>
        <end position="148"/>
    </location>
</feature>
<feature type="modified residue" description="Pyrrolidone carboxylic acid" evidence="3">
    <location>
        <position position="24"/>
    </location>
</feature>
<feature type="glycosylation site" description="N-linked (GlcNAc...) asparagine" evidence="4">
    <location>
        <position position="126"/>
    </location>
</feature>
<feature type="disulfide bond" evidence="1">
    <location>
        <begin position="34"/>
        <end position="59"/>
    </location>
</feature>
<feature type="disulfide bond" evidence="1">
    <location>
        <begin position="35"/>
        <end position="75"/>
    </location>
</feature>
<organism>
    <name type="scientific">Rattus norvegicus</name>
    <name type="common">Rat</name>
    <dbReference type="NCBI Taxonomy" id="10116"/>
    <lineage>
        <taxon>Eukaryota</taxon>
        <taxon>Metazoa</taxon>
        <taxon>Chordata</taxon>
        <taxon>Craniata</taxon>
        <taxon>Vertebrata</taxon>
        <taxon>Euteleostomi</taxon>
        <taxon>Mammalia</taxon>
        <taxon>Eutheria</taxon>
        <taxon>Euarchontoglires</taxon>
        <taxon>Glires</taxon>
        <taxon>Rodentia</taxon>
        <taxon>Myomorpha</taxon>
        <taxon>Muroidea</taxon>
        <taxon>Muridae</taxon>
        <taxon>Murinae</taxon>
        <taxon>Rattus</taxon>
    </lineage>
</organism>
<dbReference type="EMBL" id="X17053">
    <property type="protein sequence ID" value="CAA34901.1"/>
    <property type="molecule type" value="Genomic_DNA"/>
</dbReference>
<dbReference type="EMBL" id="M57441">
    <property type="protein sequence ID" value="AAA63496.1"/>
    <property type="molecule type" value="mRNA"/>
</dbReference>
<dbReference type="EMBL" id="AF058786">
    <property type="protein sequence ID" value="AAC15187.1"/>
    <property type="molecule type" value="mRNA"/>
</dbReference>
<dbReference type="PIR" id="S07723">
    <property type="entry name" value="S07723"/>
</dbReference>
<dbReference type="RefSeq" id="NP_113718.1">
    <property type="nucleotide sequence ID" value="NM_031530.1"/>
</dbReference>
<dbReference type="SMR" id="P14844"/>
<dbReference type="FunCoup" id="P14844">
    <property type="interactions" value="372"/>
</dbReference>
<dbReference type="STRING" id="10116.ENSRNOP00000009448"/>
<dbReference type="GlyCosmos" id="P14844">
    <property type="glycosylation" value="1 site, No reported glycans"/>
</dbReference>
<dbReference type="GlyGen" id="P14844">
    <property type="glycosylation" value="1 site"/>
</dbReference>
<dbReference type="PhosphoSitePlus" id="P14844"/>
<dbReference type="PaxDb" id="10116-ENSRNOP00000009448"/>
<dbReference type="Ensembl" id="ENSRNOT00000009448.4">
    <property type="protein sequence ID" value="ENSRNOP00000009448.1"/>
    <property type="gene ID" value="ENSRNOG00000007159.4"/>
</dbReference>
<dbReference type="GeneID" id="24770"/>
<dbReference type="KEGG" id="rno:24770"/>
<dbReference type="AGR" id="RGD:3645"/>
<dbReference type="CTD" id="6347"/>
<dbReference type="RGD" id="3645">
    <property type="gene designation" value="Ccl2"/>
</dbReference>
<dbReference type="eggNOG" id="ENOG502S6ZP">
    <property type="taxonomic scope" value="Eukaryota"/>
</dbReference>
<dbReference type="GeneTree" id="ENSGT01130000278316"/>
<dbReference type="HOGENOM" id="CLU_141716_1_0_1"/>
<dbReference type="InParanoid" id="P14844"/>
<dbReference type="OMA" id="PLTCCYS"/>
<dbReference type="OrthoDB" id="8900217at2759"/>
<dbReference type="PhylomeDB" id="P14844"/>
<dbReference type="TreeFam" id="TF339372"/>
<dbReference type="PRO" id="PR:P14844"/>
<dbReference type="Proteomes" id="UP000002494">
    <property type="component" value="Chromosome 10"/>
</dbReference>
<dbReference type="Bgee" id="ENSRNOG00000007159">
    <property type="expression patterns" value="Expressed in stomach and 16 other cell types or tissues"/>
</dbReference>
<dbReference type="GO" id="GO:0043679">
    <property type="term" value="C:axon terminus"/>
    <property type="evidence" value="ECO:0000314"/>
    <property type="project" value="RGD"/>
</dbReference>
<dbReference type="GO" id="GO:0044299">
    <property type="term" value="C:C-fiber"/>
    <property type="evidence" value="ECO:0000314"/>
    <property type="project" value="RGD"/>
</dbReference>
<dbReference type="GO" id="GO:0030425">
    <property type="term" value="C:dendrite"/>
    <property type="evidence" value="ECO:0000314"/>
    <property type="project" value="RGD"/>
</dbReference>
<dbReference type="GO" id="GO:0030139">
    <property type="term" value="C:endocytic vesicle"/>
    <property type="evidence" value="ECO:0000314"/>
    <property type="project" value="RGD"/>
</dbReference>
<dbReference type="GO" id="GO:0005576">
    <property type="term" value="C:extracellular region"/>
    <property type="evidence" value="ECO:0000266"/>
    <property type="project" value="RGD"/>
</dbReference>
<dbReference type="GO" id="GO:0005615">
    <property type="term" value="C:extracellular space"/>
    <property type="evidence" value="ECO:0000314"/>
    <property type="project" value="RGD"/>
</dbReference>
<dbReference type="GO" id="GO:0043025">
    <property type="term" value="C:neuronal cell body"/>
    <property type="evidence" value="ECO:0000314"/>
    <property type="project" value="RGD"/>
</dbReference>
<dbReference type="GO" id="GO:0043204">
    <property type="term" value="C:perikaryon"/>
    <property type="evidence" value="ECO:0000314"/>
    <property type="project" value="RGD"/>
</dbReference>
<dbReference type="GO" id="GO:0048471">
    <property type="term" value="C:perinuclear region of cytoplasm"/>
    <property type="evidence" value="ECO:0000314"/>
    <property type="project" value="RGD"/>
</dbReference>
<dbReference type="GO" id="GO:0048020">
    <property type="term" value="F:CCR chemokine receptor binding"/>
    <property type="evidence" value="ECO:0000318"/>
    <property type="project" value="GO_Central"/>
</dbReference>
<dbReference type="GO" id="GO:0031727">
    <property type="term" value="F:CCR2 chemokine receptor binding"/>
    <property type="evidence" value="ECO:0000266"/>
    <property type="project" value="RGD"/>
</dbReference>
<dbReference type="GO" id="GO:0042056">
    <property type="term" value="F:chemoattractant activity"/>
    <property type="evidence" value="ECO:0007669"/>
    <property type="project" value="Ensembl"/>
</dbReference>
<dbReference type="GO" id="GO:0008009">
    <property type="term" value="F:chemokine activity"/>
    <property type="evidence" value="ECO:0000314"/>
    <property type="project" value="RGD"/>
</dbReference>
<dbReference type="GO" id="GO:0005125">
    <property type="term" value="F:cytokine activity"/>
    <property type="evidence" value="ECO:0000266"/>
    <property type="project" value="RGD"/>
</dbReference>
<dbReference type="GO" id="GO:0001664">
    <property type="term" value="F:G protein-coupled receptor binding"/>
    <property type="evidence" value="ECO:0000266"/>
    <property type="project" value="RGD"/>
</dbReference>
<dbReference type="GO" id="GO:0008201">
    <property type="term" value="F:heparin binding"/>
    <property type="evidence" value="ECO:0000353"/>
    <property type="project" value="RGD"/>
</dbReference>
<dbReference type="GO" id="GO:0031100">
    <property type="term" value="P:animal organ regeneration"/>
    <property type="evidence" value="ECO:0000270"/>
    <property type="project" value="RGD"/>
</dbReference>
<dbReference type="GO" id="GO:0061844">
    <property type="term" value="P:antimicrobial humoral immune response mediated by antimicrobial peptide"/>
    <property type="evidence" value="ECO:0000318"/>
    <property type="project" value="GO_Central"/>
</dbReference>
<dbReference type="GO" id="GO:0043615">
    <property type="term" value="P:astrocyte cell migration"/>
    <property type="evidence" value="ECO:0000266"/>
    <property type="project" value="RGD"/>
</dbReference>
<dbReference type="GO" id="GO:0071318">
    <property type="term" value="P:cellular response to ATP"/>
    <property type="evidence" value="ECO:0000270"/>
    <property type="project" value="RGD"/>
</dbReference>
<dbReference type="GO" id="GO:0071549">
    <property type="term" value="P:cellular response to dexamethasone stimulus"/>
    <property type="evidence" value="ECO:0000270"/>
    <property type="project" value="RGD"/>
</dbReference>
<dbReference type="GO" id="GO:0071392">
    <property type="term" value="P:cellular response to estradiol stimulus"/>
    <property type="evidence" value="ECO:0000270"/>
    <property type="project" value="RGD"/>
</dbReference>
<dbReference type="GO" id="GO:0071398">
    <property type="term" value="P:cellular response to fatty acid"/>
    <property type="evidence" value="ECO:0000270"/>
    <property type="project" value="RGD"/>
</dbReference>
<dbReference type="GO" id="GO:0044344">
    <property type="term" value="P:cellular response to fibroblast growth factor stimulus"/>
    <property type="evidence" value="ECO:0000266"/>
    <property type="project" value="RGD"/>
</dbReference>
<dbReference type="GO" id="GO:0071333">
    <property type="term" value="P:cellular response to glucose stimulus"/>
    <property type="evidence" value="ECO:0000270"/>
    <property type="project" value="RGD"/>
</dbReference>
<dbReference type="GO" id="GO:0071403">
    <property type="term" value="P:cellular response to high density lipoprotein particle stimulus"/>
    <property type="evidence" value="ECO:0000270"/>
    <property type="project" value="RGD"/>
</dbReference>
<dbReference type="GO" id="GO:0032869">
    <property type="term" value="P:cellular response to insulin stimulus"/>
    <property type="evidence" value="ECO:0000270"/>
    <property type="project" value="RGD"/>
</dbReference>
<dbReference type="GO" id="GO:0071347">
    <property type="term" value="P:cellular response to interleukin-1"/>
    <property type="evidence" value="ECO:0000270"/>
    <property type="project" value="RGD"/>
</dbReference>
<dbReference type="GO" id="GO:0071354">
    <property type="term" value="P:cellular response to interleukin-6"/>
    <property type="evidence" value="ECO:0000270"/>
    <property type="project" value="RGD"/>
</dbReference>
<dbReference type="GO" id="GO:0071222">
    <property type="term" value="P:cellular response to lipopolysaccharide"/>
    <property type="evidence" value="ECO:0000270"/>
    <property type="project" value="RGD"/>
</dbReference>
<dbReference type="GO" id="GO:0071402">
    <property type="term" value="P:cellular response to lipoprotein particle stimulus"/>
    <property type="evidence" value="ECO:0000270"/>
    <property type="project" value="RGD"/>
</dbReference>
<dbReference type="GO" id="GO:0036006">
    <property type="term" value="P:cellular response to macrophage colony-stimulating factor stimulus"/>
    <property type="evidence" value="ECO:0000270"/>
    <property type="project" value="RGD"/>
</dbReference>
<dbReference type="GO" id="GO:0036120">
    <property type="term" value="P:cellular response to platelet-derived growth factor stimulus"/>
    <property type="evidence" value="ECO:0000270"/>
    <property type="project" value="RGD"/>
</dbReference>
<dbReference type="GO" id="GO:0071300">
    <property type="term" value="P:cellular response to retinoic acid"/>
    <property type="evidence" value="ECO:0000270"/>
    <property type="project" value="RGD"/>
</dbReference>
<dbReference type="GO" id="GO:0071356">
    <property type="term" value="P:cellular response to tumor necrosis factor"/>
    <property type="evidence" value="ECO:0000270"/>
    <property type="project" value="RGD"/>
</dbReference>
<dbReference type="GO" id="GO:0071346">
    <property type="term" value="P:cellular response to type II interferon"/>
    <property type="evidence" value="ECO:0000270"/>
    <property type="project" value="RGD"/>
</dbReference>
<dbReference type="GO" id="GO:0071466">
    <property type="term" value="P:cellular response to xenobiotic stimulus"/>
    <property type="evidence" value="ECO:0000270"/>
    <property type="project" value="RGD"/>
</dbReference>
<dbReference type="GO" id="GO:0038148">
    <property type="term" value="P:chemokine (C-C motif) ligand 2 signaling pathway"/>
    <property type="evidence" value="ECO:0007669"/>
    <property type="project" value="Ensembl"/>
</dbReference>
<dbReference type="GO" id="GO:0070098">
    <property type="term" value="P:chemokine-mediated signaling pathway"/>
    <property type="evidence" value="ECO:0000315"/>
    <property type="project" value="RGD"/>
</dbReference>
<dbReference type="GO" id="GO:0042466">
    <property type="term" value="P:chemokinesis"/>
    <property type="evidence" value="ECO:0000304"/>
    <property type="project" value="RGD"/>
</dbReference>
<dbReference type="GO" id="GO:0002544">
    <property type="term" value="P:chronic inflammatory response"/>
    <property type="evidence" value="ECO:0000270"/>
    <property type="project" value="RGD"/>
</dbReference>
<dbReference type="GO" id="GO:0019221">
    <property type="term" value="P:cytokine-mediated signaling pathway"/>
    <property type="evidence" value="ECO:0000315"/>
    <property type="project" value="RGD"/>
</dbReference>
<dbReference type="GO" id="GO:0007010">
    <property type="term" value="P:cytoskeleton organization"/>
    <property type="evidence" value="ECO:0000266"/>
    <property type="project" value="RGD"/>
</dbReference>
<dbReference type="GO" id="GO:0048245">
    <property type="term" value="P:eosinophil chemotaxis"/>
    <property type="evidence" value="ECO:0000318"/>
    <property type="project" value="GO_Central"/>
</dbReference>
<dbReference type="GO" id="GO:0008347">
    <property type="term" value="P:glial cell migration"/>
    <property type="evidence" value="ECO:0000315"/>
    <property type="project" value="RGD"/>
</dbReference>
<dbReference type="GO" id="GO:0035684">
    <property type="term" value="P:helper T cell extravasation"/>
    <property type="evidence" value="ECO:0000266"/>
    <property type="project" value="RGD"/>
</dbReference>
<dbReference type="GO" id="GO:0006954">
    <property type="term" value="P:inflammatory response"/>
    <property type="evidence" value="ECO:0000318"/>
    <property type="project" value="GO_Central"/>
</dbReference>
<dbReference type="GO" id="GO:0006874">
    <property type="term" value="P:intracellular calcium ion homeostasis"/>
    <property type="evidence" value="ECO:0000314"/>
    <property type="project" value="RGD"/>
</dbReference>
<dbReference type="GO" id="GO:0002523">
    <property type="term" value="P:leukocyte migration involved in inflammatory response"/>
    <property type="evidence" value="ECO:0000315"/>
    <property type="project" value="RGD"/>
</dbReference>
<dbReference type="GO" id="GO:0048247">
    <property type="term" value="P:lymphocyte chemotaxis"/>
    <property type="evidence" value="ECO:0000314"/>
    <property type="project" value="RGD"/>
</dbReference>
<dbReference type="GO" id="GO:0048246">
    <property type="term" value="P:macrophage chemotaxis"/>
    <property type="evidence" value="ECO:0000314"/>
    <property type="project" value="RGD"/>
</dbReference>
<dbReference type="GO" id="GO:0060056">
    <property type="term" value="P:mammary gland involution"/>
    <property type="evidence" value="ECO:0000270"/>
    <property type="project" value="RGD"/>
</dbReference>
<dbReference type="GO" id="GO:0060135">
    <property type="term" value="P:maternal process involved in female pregnancy"/>
    <property type="evidence" value="ECO:0000270"/>
    <property type="project" value="RGD"/>
</dbReference>
<dbReference type="GO" id="GO:0060137">
    <property type="term" value="P:maternal process involved in parturition"/>
    <property type="evidence" value="ECO:0000270"/>
    <property type="project" value="RGD"/>
</dbReference>
<dbReference type="GO" id="GO:0002548">
    <property type="term" value="P:monocyte chemotaxis"/>
    <property type="evidence" value="ECO:0000266"/>
    <property type="project" value="RGD"/>
</dbReference>
<dbReference type="GO" id="GO:0016525">
    <property type="term" value="P:negative regulation of angiogenesis"/>
    <property type="evidence" value="ECO:0000266"/>
    <property type="project" value="RGD"/>
</dbReference>
<dbReference type="GO" id="GO:2000134">
    <property type="term" value="P:negative regulation of G1/S transition of mitotic cell cycle"/>
    <property type="evidence" value="ECO:0000266"/>
    <property type="project" value="RGD"/>
</dbReference>
<dbReference type="GO" id="GO:0034351">
    <property type="term" value="P:negative regulation of glial cell apoptotic process"/>
    <property type="evidence" value="ECO:0000266"/>
    <property type="project" value="RGD"/>
</dbReference>
<dbReference type="GO" id="GO:2000502">
    <property type="term" value="P:negative regulation of natural killer cell chemotaxis"/>
    <property type="evidence" value="ECO:0000266"/>
    <property type="project" value="RGD"/>
</dbReference>
<dbReference type="GO" id="GO:0043524">
    <property type="term" value="P:negative regulation of neuron apoptotic process"/>
    <property type="evidence" value="ECO:0000266"/>
    <property type="project" value="RGD"/>
</dbReference>
<dbReference type="GO" id="GO:1905563">
    <property type="term" value="P:negative regulation of vascular endothelial cell proliferation"/>
    <property type="evidence" value="ECO:0000266"/>
    <property type="project" value="RGD"/>
</dbReference>
<dbReference type="GO" id="GO:0030593">
    <property type="term" value="P:neutrophil chemotaxis"/>
    <property type="evidence" value="ECO:0000315"/>
    <property type="project" value="RGD"/>
</dbReference>
<dbReference type="GO" id="GO:0030316">
    <property type="term" value="P:osteoclast differentiation"/>
    <property type="evidence" value="ECO:0007007"/>
    <property type="project" value="RGD"/>
</dbReference>
<dbReference type="GO" id="GO:2000427">
    <property type="term" value="P:positive regulation of apoptotic cell clearance"/>
    <property type="evidence" value="ECO:0000266"/>
    <property type="project" value="RGD"/>
</dbReference>
<dbReference type="GO" id="GO:0090280">
    <property type="term" value="P:positive regulation of calcium ion import"/>
    <property type="evidence" value="ECO:0000266"/>
    <property type="project" value="RGD"/>
</dbReference>
<dbReference type="GO" id="GO:0045785">
    <property type="term" value="P:positive regulation of cell adhesion"/>
    <property type="evidence" value="ECO:0000314"/>
    <property type="project" value="RGD"/>
</dbReference>
<dbReference type="GO" id="GO:0030335">
    <property type="term" value="P:positive regulation of cell migration"/>
    <property type="evidence" value="ECO:0000318"/>
    <property type="project" value="GO_Central"/>
</dbReference>
<dbReference type="GO" id="GO:0022409">
    <property type="term" value="P:positive regulation of cell-cell adhesion"/>
    <property type="evidence" value="ECO:0000314"/>
    <property type="project" value="RGD"/>
</dbReference>
<dbReference type="GO" id="GO:0002693">
    <property type="term" value="P:positive regulation of cellular extravasation"/>
    <property type="evidence" value="ECO:0000314"/>
    <property type="project" value="RGD"/>
</dbReference>
<dbReference type="GO" id="GO:0032967">
    <property type="term" value="P:positive regulation of collagen biosynthetic process"/>
    <property type="evidence" value="ECO:0000314"/>
    <property type="project" value="RGD"/>
</dbReference>
<dbReference type="GO" id="GO:2000353">
    <property type="term" value="P:positive regulation of endothelial cell apoptotic process"/>
    <property type="evidence" value="ECO:0000266"/>
    <property type="project" value="RGD"/>
</dbReference>
<dbReference type="GO" id="GO:0001938">
    <property type="term" value="P:positive regulation of endothelial cell proliferation"/>
    <property type="evidence" value="ECO:0000315"/>
    <property type="project" value="RGD"/>
</dbReference>
<dbReference type="GO" id="GO:0010628">
    <property type="term" value="P:positive regulation of gene expression"/>
    <property type="evidence" value="ECO:0000266"/>
    <property type="project" value="RGD"/>
</dbReference>
<dbReference type="GO" id="GO:1900451">
    <property type="term" value="P:positive regulation of glutamate receptor signaling pathway"/>
    <property type="evidence" value="ECO:0000316"/>
    <property type="project" value="ARUK-UCL"/>
</dbReference>
<dbReference type="GO" id="GO:0090265">
    <property type="term" value="P:positive regulation of immune complex clearance by monocytes and macrophages"/>
    <property type="evidence" value="ECO:0000266"/>
    <property type="project" value="RGD"/>
</dbReference>
<dbReference type="GO" id="GO:0001912">
    <property type="term" value="P:positive regulation of leukocyte mediated cytotoxicity"/>
    <property type="evidence" value="ECO:0000315"/>
    <property type="project" value="RGD"/>
</dbReference>
<dbReference type="GO" id="GO:0002687">
    <property type="term" value="P:positive regulation of leukocyte migration"/>
    <property type="evidence" value="ECO:0000314"/>
    <property type="project" value="RGD"/>
</dbReference>
<dbReference type="GO" id="GO:0010759">
    <property type="term" value="P:positive regulation of macrophage chemotaxis"/>
    <property type="evidence" value="ECO:0000314"/>
    <property type="project" value="RGD"/>
</dbReference>
<dbReference type="GO" id="GO:0090026">
    <property type="term" value="P:positive regulation of monocyte chemotaxis"/>
    <property type="evidence" value="ECO:0000314"/>
    <property type="project" value="RGD"/>
</dbReference>
<dbReference type="GO" id="GO:0090314">
    <property type="term" value="P:positive regulation of protein targeting to membrane"/>
    <property type="evidence" value="ECO:0000314"/>
    <property type="project" value="RGD"/>
</dbReference>
<dbReference type="GO" id="GO:0050806">
    <property type="term" value="P:positive regulation of synaptic transmission"/>
    <property type="evidence" value="ECO:0000314"/>
    <property type="project" value="RGD"/>
</dbReference>
<dbReference type="GO" id="GO:0051968">
    <property type="term" value="P:positive regulation of synaptic transmission, glutamatergic"/>
    <property type="evidence" value="ECO:0000250"/>
    <property type="project" value="UniProtKB"/>
</dbReference>
<dbReference type="GO" id="GO:0050870">
    <property type="term" value="P:positive regulation of T cell activation"/>
    <property type="evidence" value="ECO:0000266"/>
    <property type="project" value="RGD"/>
</dbReference>
<dbReference type="GO" id="GO:0032760">
    <property type="term" value="P:positive regulation of tumor necrosis factor production"/>
    <property type="evidence" value="ECO:0000315"/>
    <property type="project" value="RGD"/>
</dbReference>
<dbReference type="GO" id="GO:0090303">
    <property type="term" value="P:positive regulation of wound healing"/>
    <property type="evidence" value="ECO:0000315"/>
    <property type="project" value="RGD"/>
</dbReference>
<dbReference type="GO" id="GO:0008360">
    <property type="term" value="P:regulation of cell shape"/>
    <property type="evidence" value="ECO:0000266"/>
    <property type="project" value="RGD"/>
</dbReference>
<dbReference type="GO" id="GO:0010574">
    <property type="term" value="P:regulation of vascular endothelial growth factor production"/>
    <property type="evidence" value="ECO:0000266"/>
    <property type="project" value="RGD"/>
</dbReference>
<dbReference type="GO" id="GO:0014823">
    <property type="term" value="P:response to activity"/>
    <property type="evidence" value="ECO:0000270"/>
    <property type="project" value="RGD"/>
</dbReference>
<dbReference type="GO" id="GO:0043200">
    <property type="term" value="P:response to amino acid"/>
    <property type="evidence" value="ECO:0000270"/>
    <property type="project" value="RGD"/>
</dbReference>
<dbReference type="GO" id="GO:0009617">
    <property type="term" value="P:response to bacterium"/>
    <property type="evidence" value="ECO:0000266"/>
    <property type="project" value="RGD"/>
</dbReference>
<dbReference type="GO" id="GO:1905237">
    <property type="term" value="P:response to cyclosporin A"/>
    <property type="evidence" value="ECO:0000270"/>
    <property type="project" value="RGD"/>
</dbReference>
<dbReference type="GO" id="GO:0045471">
    <property type="term" value="P:response to ethanol"/>
    <property type="evidence" value="ECO:0000270"/>
    <property type="project" value="RGD"/>
</dbReference>
<dbReference type="GO" id="GO:0010332">
    <property type="term" value="P:response to gamma radiation"/>
    <property type="evidence" value="ECO:0000270"/>
    <property type="project" value="RGD"/>
</dbReference>
<dbReference type="GO" id="GO:0051384">
    <property type="term" value="P:response to glucocorticoid"/>
    <property type="evidence" value="ECO:0000270"/>
    <property type="project" value="RGD"/>
</dbReference>
<dbReference type="GO" id="GO:0001666">
    <property type="term" value="P:response to hypoxia"/>
    <property type="evidence" value="ECO:0000270"/>
    <property type="project" value="RGD"/>
</dbReference>
<dbReference type="GO" id="GO:0035900">
    <property type="term" value="P:response to isolation stress"/>
    <property type="evidence" value="ECO:0000270"/>
    <property type="project" value="RGD"/>
</dbReference>
<dbReference type="GO" id="GO:0032496">
    <property type="term" value="P:response to lipopolysaccharide"/>
    <property type="evidence" value="ECO:0000270"/>
    <property type="project" value="RGD"/>
</dbReference>
<dbReference type="GO" id="GO:0009612">
    <property type="term" value="P:response to mechanical stimulus"/>
    <property type="evidence" value="ECO:0000270"/>
    <property type="project" value="RGD"/>
</dbReference>
<dbReference type="GO" id="GO:0032570">
    <property type="term" value="P:response to progesterone"/>
    <property type="evidence" value="ECO:0000270"/>
    <property type="project" value="RGD"/>
</dbReference>
<dbReference type="GO" id="GO:0034612">
    <property type="term" value="P:response to tumor necrosis factor"/>
    <property type="evidence" value="ECO:0000270"/>
    <property type="project" value="RGD"/>
</dbReference>
<dbReference type="GO" id="GO:0033552">
    <property type="term" value="P:response to vitamin B3"/>
    <property type="evidence" value="ECO:0000270"/>
    <property type="project" value="RGD"/>
</dbReference>
<dbReference type="GO" id="GO:0009611">
    <property type="term" value="P:response to wounding"/>
    <property type="evidence" value="ECO:0000266"/>
    <property type="project" value="RGD"/>
</dbReference>
<dbReference type="GO" id="GO:0009410">
    <property type="term" value="P:response to xenobiotic stimulus"/>
    <property type="evidence" value="ECO:0000270"/>
    <property type="project" value="RGD"/>
</dbReference>
<dbReference type="GO" id="GO:0019233">
    <property type="term" value="P:sensory perception of pain"/>
    <property type="evidence" value="ECO:0000250"/>
    <property type="project" value="UniProtKB"/>
</dbReference>
<dbReference type="GO" id="GO:0007179">
    <property type="term" value="P:transforming growth factor beta receptor signaling pathway"/>
    <property type="evidence" value="ECO:0000315"/>
    <property type="project" value="RGD"/>
</dbReference>
<dbReference type="GO" id="GO:0048010">
    <property type="term" value="P:vascular endothelial growth factor receptor signaling pathway"/>
    <property type="evidence" value="ECO:0000315"/>
    <property type="project" value="RGD"/>
</dbReference>
<dbReference type="CDD" id="cd00272">
    <property type="entry name" value="Chemokine_CC"/>
    <property type="match status" value="1"/>
</dbReference>
<dbReference type="FunFam" id="2.40.50.40:FF:000002">
    <property type="entry name" value="C-C motif chemokine"/>
    <property type="match status" value="1"/>
</dbReference>
<dbReference type="Gene3D" id="2.40.50.40">
    <property type="match status" value="1"/>
</dbReference>
<dbReference type="InterPro" id="IPR039809">
    <property type="entry name" value="Chemokine_b/g/d"/>
</dbReference>
<dbReference type="InterPro" id="IPR000827">
    <property type="entry name" value="Chemokine_CC_CS"/>
</dbReference>
<dbReference type="InterPro" id="IPR001811">
    <property type="entry name" value="Chemokine_IL8-like_dom"/>
</dbReference>
<dbReference type="InterPro" id="IPR036048">
    <property type="entry name" value="Interleukin_8-like_sf"/>
</dbReference>
<dbReference type="PANTHER" id="PTHR12015:SF117">
    <property type="entry name" value="C-C MOTIF CHEMOKINE 2"/>
    <property type="match status" value="1"/>
</dbReference>
<dbReference type="PANTHER" id="PTHR12015">
    <property type="entry name" value="SMALL INDUCIBLE CYTOKINE A"/>
    <property type="match status" value="1"/>
</dbReference>
<dbReference type="Pfam" id="PF00048">
    <property type="entry name" value="IL8"/>
    <property type="match status" value="1"/>
</dbReference>
<dbReference type="SMART" id="SM00199">
    <property type="entry name" value="SCY"/>
    <property type="match status" value="1"/>
</dbReference>
<dbReference type="SUPFAM" id="SSF54117">
    <property type="entry name" value="Interleukin 8-like chemokines"/>
    <property type="match status" value="1"/>
</dbReference>
<dbReference type="PROSITE" id="PS00472">
    <property type="entry name" value="SMALL_CYTOKINES_CC"/>
    <property type="match status" value="1"/>
</dbReference>
<keyword id="KW-0145">Chemotaxis</keyword>
<keyword id="KW-0202">Cytokine</keyword>
<keyword id="KW-1015">Disulfide bond</keyword>
<keyword id="KW-0325">Glycoprotein</keyword>
<keyword id="KW-0395">Inflammatory response</keyword>
<keyword id="KW-0873">Pyrrolidone carboxylic acid</keyword>
<keyword id="KW-1185">Reference proteome</keyword>
<keyword id="KW-0964">Secreted</keyword>
<keyword id="KW-0732">Signal</keyword>